<proteinExistence type="inferred from homology"/>
<keyword id="KW-0963">Cytoplasm</keyword>
<keyword id="KW-0489">Methyltransferase</keyword>
<keyword id="KW-0698">rRNA processing</keyword>
<keyword id="KW-0949">S-adenosyl-L-methionine</keyword>
<keyword id="KW-0808">Transferase</keyword>
<evidence type="ECO:0000255" key="1">
    <source>
        <dbReference type="HAMAP-Rule" id="MF_00658"/>
    </source>
</evidence>
<comment type="function">
    <text evidence="1">Specifically methylates the pseudouridine at position 1915 (m3Psi1915) in 23S rRNA.</text>
</comment>
<comment type="catalytic activity">
    <reaction evidence="1">
        <text>pseudouridine(1915) in 23S rRNA + S-adenosyl-L-methionine = N(3)-methylpseudouridine(1915) in 23S rRNA + S-adenosyl-L-homocysteine + H(+)</text>
        <dbReference type="Rhea" id="RHEA:42752"/>
        <dbReference type="Rhea" id="RHEA-COMP:10221"/>
        <dbReference type="Rhea" id="RHEA-COMP:10222"/>
        <dbReference type="ChEBI" id="CHEBI:15378"/>
        <dbReference type="ChEBI" id="CHEBI:57856"/>
        <dbReference type="ChEBI" id="CHEBI:59789"/>
        <dbReference type="ChEBI" id="CHEBI:65314"/>
        <dbReference type="ChEBI" id="CHEBI:74486"/>
        <dbReference type="EC" id="2.1.1.177"/>
    </reaction>
</comment>
<comment type="subunit">
    <text evidence="1">Homodimer.</text>
</comment>
<comment type="subcellular location">
    <subcellularLocation>
        <location evidence="1">Cytoplasm</location>
    </subcellularLocation>
</comment>
<comment type="similarity">
    <text evidence="1">Belongs to the RNA methyltransferase RlmH family.</text>
</comment>
<dbReference type="EC" id="2.1.1.177" evidence="1"/>
<dbReference type="EMBL" id="CP000262">
    <property type="protein sequence ID" value="ABF38927.1"/>
    <property type="molecule type" value="Genomic_DNA"/>
</dbReference>
<dbReference type="SMR" id="Q1J434"/>
<dbReference type="KEGG" id="spi:MGAS10750_Spy1977"/>
<dbReference type="HOGENOM" id="CLU_100552_0_0_9"/>
<dbReference type="Proteomes" id="UP000002434">
    <property type="component" value="Chromosome"/>
</dbReference>
<dbReference type="GO" id="GO:0005737">
    <property type="term" value="C:cytoplasm"/>
    <property type="evidence" value="ECO:0007669"/>
    <property type="project" value="UniProtKB-SubCell"/>
</dbReference>
<dbReference type="GO" id="GO:0070038">
    <property type="term" value="F:rRNA (pseudouridine-N3-)-methyltransferase activity"/>
    <property type="evidence" value="ECO:0007669"/>
    <property type="project" value="UniProtKB-UniRule"/>
</dbReference>
<dbReference type="CDD" id="cd18081">
    <property type="entry name" value="RlmH-like"/>
    <property type="match status" value="1"/>
</dbReference>
<dbReference type="Gene3D" id="3.40.1280.10">
    <property type="match status" value="1"/>
</dbReference>
<dbReference type="HAMAP" id="MF_00658">
    <property type="entry name" value="23SrRNA_methyltr_H"/>
    <property type="match status" value="1"/>
</dbReference>
<dbReference type="InterPro" id="IPR029028">
    <property type="entry name" value="Alpha/beta_knot_MTases"/>
</dbReference>
<dbReference type="InterPro" id="IPR003742">
    <property type="entry name" value="RlmH-like"/>
</dbReference>
<dbReference type="InterPro" id="IPR029026">
    <property type="entry name" value="tRNA_m1G_MTases_N"/>
</dbReference>
<dbReference type="NCBIfam" id="NF000985">
    <property type="entry name" value="PRK00103.1-3"/>
    <property type="match status" value="1"/>
</dbReference>
<dbReference type="NCBIfam" id="TIGR00246">
    <property type="entry name" value="tRNA_RlmH_YbeA"/>
    <property type="match status" value="1"/>
</dbReference>
<dbReference type="PANTHER" id="PTHR33603">
    <property type="entry name" value="METHYLTRANSFERASE"/>
    <property type="match status" value="1"/>
</dbReference>
<dbReference type="PANTHER" id="PTHR33603:SF1">
    <property type="entry name" value="RIBOSOMAL RNA LARGE SUBUNIT METHYLTRANSFERASE H"/>
    <property type="match status" value="1"/>
</dbReference>
<dbReference type="Pfam" id="PF02590">
    <property type="entry name" value="SPOUT_MTase"/>
    <property type="match status" value="1"/>
</dbReference>
<dbReference type="PIRSF" id="PIRSF004505">
    <property type="entry name" value="MT_bac"/>
    <property type="match status" value="1"/>
</dbReference>
<dbReference type="SUPFAM" id="SSF75217">
    <property type="entry name" value="alpha/beta knot"/>
    <property type="match status" value="1"/>
</dbReference>
<organism>
    <name type="scientific">Streptococcus pyogenes serotype M4 (strain MGAS10750)</name>
    <dbReference type="NCBI Taxonomy" id="370554"/>
    <lineage>
        <taxon>Bacteria</taxon>
        <taxon>Bacillati</taxon>
        <taxon>Bacillota</taxon>
        <taxon>Bacilli</taxon>
        <taxon>Lactobacillales</taxon>
        <taxon>Streptococcaceae</taxon>
        <taxon>Streptococcus</taxon>
    </lineage>
</organism>
<gene>
    <name evidence="1" type="primary">rlmH</name>
    <name type="ordered locus">MGAS10750_Spy1977</name>
</gene>
<name>RLMH_STRPF</name>
<sequence length="159" mass="18184">MKVKLICVGKLKERYLKDGISEYQKRLSRFCQFEMIELTDERTPDKASFADNQLIMSKEAQRIHKKIGERDFVIALAIEGKQFPSETFSELISGVTVKGYSTITFIIGGSLGLDSIIKKRANMLMSFGLLTLPHQLMRLVLTEQIYRAFMITQGSPYHK</sequence>
<reference key="1">
    <citation type="journal article" date="2006" name="Proc. Natl. Acad. Sci. U.S.A.">
        <title>Molecular genetic anatomy of inter- and intraserotype variation in the human bacterial pathogen group A Streptococcus.</title>
        <authorList>
            <person name="Beres S.B."/>
            <person name="Richter E.W."/>
            <person name="Nagiec M.J."/>
            <person name="Sumby P."/>
            <person name="Porcella S.F."/>
            <person name="DeLeo F.R."/>
            <person name="Musser J.M."/>
        </authorList>
    </citation>
    <scope>NUCLEOTIDE SEQUENCE [LARGE SCALE GENOMIC DNA]</scope>
    <source>
        <strain>MGAS10750</strain>
    </source>
</reference>
<feature type="chain" id="PRO_0000260621" description="Ribosomal RNA large subunit methyltransferase H">
    <location>
        <begin position="1"/>
        <end position="159"/>
    </location>
</feature>
<feature type="binding site" evidence="1">
    <location>
        <position position="76"/>
    </location>
    <ligand>
        <name>S-adenosyl-L-methionine</name>
        <dbReference type="ChEBI" id="CHEBI:59789"/>
    </ligand>
</feature>
<feature type="binding site" evidence="1">
    <location>
        <position position="108"/>
    </location>
    <ligand>
        <name>S-adenosyl-L-methionine</name>
        <dbReference type="ChEBI" id="CHEBI:59789"/>
    </ligand>
</feature>
<feature type="binding site" evidence="1">
    <location>
        <begin position="127"/>
        <end position="132"/>
    </location>
    <ligand>
        <name>S-adenosyl-L-methionine</name>
        <dbReference type="ChEBI" id="CHEBI:59789"/>
    </ligand>
</feature>
<accession>Q1J434</accession>
<protein>
    <recommendedName>
        <fullName evidence="1">Ribosomal RNA large subunit methyltransferase H</fullName>
        <ecNumber evidence="1">2.1.1.177</ecNumber>
    </recommendedName>
    <alternativeName>
        <fullName evidence="1">23S rRNA (pseudouridine1915-N3)-methyltransferase</fullName>
    </alternativeName>
    <alternativeName>
        <fullName evidence="1">23S rRNA m3Psi1915 methyltransferase</fullName>
    </alternativeName>
    <alternativeName>
        <fullName evidence="1">rRNA (pseudouridine-N3-)-methyltransferase RlmH</fullName>
    </alternativeName>
</protein>